<comment type="catalytic activity">
    <reaction evidence="1">
        <text>D-arabinose 5-phosphate + phosphoenolpyruvate + H2O = 3-deoxy-alpha-D-manno-2-octulosonate-8-phosphate + phosphate</text>
        <dbReference type="Rhea" id="RHEA:14053"/>
        <dbReference type="ChEBI" id="CHEBI:15377"/>
        <dbReference type="ChEBI" id="CHEBI:43474"/>
        <dbReference type="ChEBI" id="CHEBI:57693"/>
        <dbReference type="ChEBI" id="CHEBI:58702"/>
        <dbReference type="ChEBI" id="CHEBI:85985"/>
        <dbReference type="EC" id="2.5.1.55"/>
    </reaction>
</comment>
<comment type="pathway">
    <text evidence="1">Carbohydrate biosynthesis; 3-deoxy-D-manno-octulosonate biosynthesis; 3-deoxy-D-manno-octulosonate from D-ribulose 5-phosphate: step 2/3.</text>
</comment>
<comment type="pathway">
    <text evidence="1">Bacterial outer membrane biogenesis; lipopolysaccharide biosynthesis.</text>
</comment>
<comment type="subcellular location">
    <subcellularLocation>
        <location evidence="1">Cytoplasm</location>
    </subcellularLocation>
</comment>
<comment type="similarity">
    <text evidence="1">Belongs to the KdsA family.</text>
</comment>
<sequence>MQKVVKLNNIKIGNDLPFVLITGPCQIEGKDHALFMAEKLVKLTSKLEIPFIYKSSFDKANRTSVHGIRGVGIEKGLEILSKVKSEFDCPIVTDVHSESQCTATAEVADILQIPAFLCRQTDLLQAAAKTGKIVKVKKGQFLAPWDMKNVQTKLETFGVKDILFTERGACFGYNNLVSDMRSLAIMAELNVPVVFDATHSVQQPGGLGGSTGGERKYVELLAKAATSVGIAGMYMEVHQDPDNAPSDGPCMMKLDNLESILIKLKKYDKITKEK</sequence>
<evidence type="ECO:0000255" key="1">
    <source>
        <dbReference type="HAMAP-Rule" id="MF_00056"/>
    </source>
</evidence>
<accession>A8GQM3</accession>
<feature type="chain" id="PRO_1000003347" description="2-dehydro-3-deoxyphosphooctonate aldolase">
    <location>
        <begin position="1"/>
        <end position="274"/>
    </location>
</feature>
<protein>
    <recommendedName>
        <fullName evidence="1">2-dehydro-3-deoxyphosphooctonate aldolase</fullName>
        <ecNumber evidence="1">2.5.1.55</ecNumber>
    </recommendedName>
    <alternativeName>
        <fullName evidence="1">3-deoxy-D-manno-octulosonic acid 8-phosphate synthase</fullName>
    </alternativeName>
    <alternativeName>
        <fullName evidence="1">KDO-8-phosphate synthase</fullName>
        <shortName evidence="1">KDO 8-P synthase</shortName>
        <shortName evidence="1">KDOPS</shortName>
    </alternativeName>
    <alternativeName>
        <fullName evidence="1">Phospho-2-dehydro-3-deoxyoctonate aldolase</fullName>
    </alternativeName>
</protein>
<proteinExistence type="inferred from homology"/>
<gene>
    <name evidence="1" type="primary">kdsA</name>
    <name type="ordered locus">A1G_00560</name>
</gene>
<keyword id="KW-0963">Cytoplasm</keyword>
<keyword id="KW-0448">Lipopolysaccharide biosynthesis</keyword>
<keyword id="KW-0808">Transferase</keyword>
<name>KDSA_RICRS</name>
<organism>
    <name type="scientific">Rickettsia rickettsii (strain Sheila Smith)</name>
    <dbReference type="NCBI Taxonomy" id="392021"/>
    <lineage>
        <taxon>Bacteria</taxon>
        <taxon>Pseudomonadati</taxon>
        <taxon>Pseudomonadota</taxon>
        <taxon>Alphaproteobacteria</taxon>
        <taxon>Rickettsiales</taxon>
        <taxon>Rickettsiaceae</taxon>
        <taxon>Rickettsieae</taxon>
        <taxon>Rickettsia</taxon>
        <taxon>spotted fever group</taxon>
    </lineage>
</organism>
<reference key="1">
    <citation type="submission" date="2007-09" db="EMBL/GenBank/DDBJ databases">
        <title>Complete genome sequence of Rickettsia rickettsii.</title>
        <authorList>
            <person name="Madan A."/>
            <person name="Fahey J."/>
            <person name="Helton E."/>
            <person name="Ketteman M."/>
            <person name="Madan A."/>
            <person name="Rodrigues S."/>
            <person name="Sanchez A."/>
            <person name="Dasch G."/>
            <person name="Eremeeva M."/>
        </authorList>
    </citation>
    <scope>NUCLEOTIDE SEQUENCE [LARGE SCALE GENOMIC DNA]</scope>
    <source>
        <strain>Sheila Smith</strain>
    </source>
</reference>
<dbReference type="EC" id="2.5.1.55" evidence="1"/>
<dbReference type="EMBL" id="CP000848">
    <property type="protein sequence ID" value="ABV75698.1"/>
    <property type="molecule type" value="Genomic_DNA"/>
</dbReference>
<dbReference type="RefSeq" id="WP_012150315.1">
    <property type="nucleotide sequence ID" value="NZ_CP121767.1"/>
</dbReference>
<dbReference type="SMR" id="A8GQM3"/>
<dbReference type="GeneID" id="79936891"/>
<dbReference type="KEGG" id="rri:A1G_00560"/>
<dbReference type="HOGENOM" id="CLU_036666_0_0_5"/>
<dbReference type="UniPathway" id="UPA00030"/>
<dbReference type="UniPathway" id="UPA00357">
    <property type="reaction ID" value="UER00474"/>
</dbReference>
<dbReference type="Proteomes" id="UP000006832">
    <property type="component" value="Chromosome"/>
</dbReference>
<dbReference type="GO" id="GO:0005737">
    <property type="term" value="C:cytoplasm"/>
    <property type="evidence" value="ECO:0007669"/>
    <property type="project" value="UniProtKB-SubCell"/>
</dbReference>
<dbReference type="GO" id="GO:0008676">
    <property type="term" value="F:3-deoxy-8-phosphooctulonate synthase activity"/>
    <property type="evidence" value="ECO:0007669"/>
    <property type="project" value="UniProtKB-UniRule"/>
</dbReference>
<dbReference type="GO" id="GO:0019294">
    <property type="term" value="P:keto-3-deoxy-D-manno-octulosonic acid biosynthetic process"/>
    <property type="evidence" value="ECO:0007669"/>
    <property type="project" value="UniProtKB-UniRule"/>
</dbReference>
<dbReference type="Gene3D" id="3.20.20.70">
    <property type="entry name" value="Aldolase class I"/>
    <property type="match status" value="1"/>
</dbReference>
<dbReference type="HAMAP" id="MF_00056">
    <property type="entry name" value="KDO8P_synth"/>
    <property type="match status" value="1"/>
</dbReference>
<dbReference type="InterPro" id="IPR013785">
    <property type="entry name" value="Aldolase_TIM"/>
</dbReference>
<dbReference type="InterPro" id="IPR006218">
    <property type="entry name" value="DAHP1/KDSA"/>
</dbReference>
<dbReference type="InterPro" id="IPR006269">
    <property type="entry name" value="KDO8P_synthase"/>
</dbReference>
<dbReference type="NCBIfam" id="TIGR01362">
    <property type="entry name" value="KDO8P_synth"/>
    <property type="match status" value="1"/>
</dbReference>
<dbReference type="NCBIfam" id="NF003543">
    <property type="entry name" value="PRK05198.1"/>
    <property type="match status" value="1"/>
</dbReference>
<dbReference type="PANTHER" id="PTHR21057">
    <property type="entry name" value="PHOSPHO-2-DEHYDRO-3-DEOXYHEPTONATE ALDOLASE"/>
    <property type="match status" value="1"/>
</dbReference>
<dbReference type="Pfam" id="PF00793">
    <property type="entry name" value="DAHP_synth_1"/>
    <property type="match status" value="1"/>
</dbReference>
<dbReference type="SUPFAM" id="SSF51569">
    <property type="entry name" value="Aldolase"/>
    <property type="match status" value="1"/>
</dbReference>